<sequence>MMHFKSGLELTELQNMTVPEDDNVSNDSNDFTEVENGQINSKFISDRESRRSLTNSHLEKRKCDEYIPGTTSLGMSVFNLSNAIMGSGILGLAFALANTGILLFLILLTSVTLLSIYSINLLLICSKETGCMVYEKLGEQVFGTTGKLVIFGATSLQNTGAMLSYLFIVKNELPSAIKSLMGEEDAFSAWYVDGRVLVVMVTFGIILPLCLLKNLGYLGYTSGFSLSCMMFFLIVVIYKKFQTPCMSVEQNSTVSANVTDACTPKYVTFNSKTVYALPTIAFAFVCHPSVLPIYSELKDRSQKKMQMVSNISFFAMFVMYFLTAIFGYLTFYEKVQSDLLHKYQSTGDILILTVRLAVIVAVILTVPVLFFTVRSSLFELAKKTKFHLCRHVLVTIILLIIINLLVIFIPSMKDIFGVVGVTSANMLIFILPSSLYLKITNQDGDKGTQRIWAALFLGLGVLFSLISIPLVIYDWACSSGTDEGH</sequence>
<keyword id="KW-0025">Alternative splicing</keyword>
<keyword id="KW-0029">Amino-acid transport</keyword>
<keyword id="KW-1003">Cell membrane</keyword>
<keyword id="KW-1015">Disulfide bond</keyword>
<keyword id="KW-0325">Glycoprotein</keyword>
<keyword id="KW-0406">Ion transport</keyword>
<keyword id="KW-0472">Membrane</keyword>
<keyword id="KW-0597">Phosphoprotein</keyword>
<keyword id="KW-1185">Reference proteome</keyword>
<keyword id="KW-0915">Sodium</keyword>
<keyword id="KW-0739">Sodium transport</keyword>
<keyword id="KW-0769">Symport</keyword>
<keyword id="KW-0812">Transmembrane</keyword>
<keyword id="KW-1133">Transmembrane helix</keyword>
<keyword id="KW-0813">Transport</keyword>
<dbReference type="EMBL" id="AF184240">
    <property type="protein sequence ID" value="AAG43433.2"/>
    <property type="molecule type" value="mRNA"/>
</dbReference>
<dbReference type="EMBL" id="AK029189">
    <property type="protein sequence ID" value="BAC26341.1"/>
    <property type="molecule type" value="mRNA"/>
</dbReference>
<dbReference type="EMBL" id="AK034130">
    <property type="protein sequence ID" value="BAC28597.1"/>
    <property type="molecule type" value="mRNA"/>
</dbReference>
<dbReference type="EMBL" id="AK035098">
    <property type="protein sequence ID" value="BAC28944.1"/>
    <property type="molecule type" value="mRNA"/>
</dbReference>
<dbReference type="EMBL" id="AK047459">
    <property type="protein sequence ID" value="BAC33064.1"/>
    <property type="molecule type" value="mRNA"/>
</dbReference>
<dbReference type="EMBL" id="AK049294">
    <property type="protein sequence ID" value="BAC33663.1"/>
    <property type="molecule type" value="mRNA"/>
</dbReference>
<dbReference type="EMBL" id="AK050914">
    <property type="protein sequence ID" value="BAC34457.1"/>
    <property type="molecule type" value="mRNA"/>
</dbReference>
<dbReference type="EMBL" id="AK081724">
    <property type="protein sequence ID" value="BAC38310.1"/>
    <property type="molecule type" value="mRNA"/>
</dbReference>
<dbReference type="EMBL" id="AK162612">
    <property type="protein sequence ID" value="BAE36989.1"/>
    <property type="molecule type" value="mRNA"/>
</dbReference>
<dbReference type="EMBL" id="AK163914">
    <property type="protein sequence ID" value="BAE37532.1"/>
    <property type="molecule type" value="mRNA"/>
</dbReference>
<dbReference type="EMBL" id="AK165188">
    <property type="protein sequence ID" value="BAE38067.1"/>
    <property type="molecule type" value="mRNA"/>
</dbReference>
<dbReference type="EMBL" id="BC030378">
    <property type="protein sequence ID" value="AAH30378.1"/>
    <property type="molecule type" value="mRNA"/>
</dbReference>
<dbReference type="EMBL" id="BC066815">
    <property type="protein sequence ID" value="AAH66815.1"/>
    <property type="molecule type" value="mRNA"/>
</dbReference>
<dbReference type="CCDS" id="CCDS27777.1">
    <molecule id="Q8K2P7-1"/>
</dbReference>
<dbReference type="RefSeq" id="NP_001159928.1">
    <molecule id="Q8K2P7-1"/>
    <property type="nucleotide sequence ID" value="NM_001166456.1"/>
</dbReference>
<dbReference type="RefSeq" id="NP_001159930.1">
    <molecule id="Q8K2P7-1"/>
    <property type="nucleotide sequence ID" value="NM_001166458.1"/>
</dbReference>
<dbReference type="RefSeq" id="NP_598847.2">
    <molecule id="Q8K2P7-1"/>
    <property type="nucleotide sequence ID" value="NM_134086.4"/>
</dbReference>
<dbReference type="RefSeq" id="XP_006520298.1">
    <molecule id="Q8K2P7-1"/>
    <property type="nucleotide sequence ID" value="XM_006520235.5"/>
</dbReference>
<dbReference type="RefSeq" id="XP_030104117.1">
    <molecule id="Q8K2P7-1"/>
    <property type="nucleotide sequence ID" value="XM_030248257.2"/>
</dbReference>
<dbReference type="RefSeq" id="XP_030104118.1">
    <molecule id="Q8K2P7-1"/>
    <property type="nucleotide sequence ID" value="XM_030248258.2"/>
</dbReference>
<dbReference type="RefSeq" id="XP_030104119.1">
    <molecule id="Q8K2P7-1"/>
    <property type="nucleotide sequence ID" value="XM_030248259.2"/>
</dbReference>
<dbReference type="RefSeq" id="XP_036014945.1">
    <molecule id="Q8K2P7-1"/>
    <property type="nucleotide sequence ID" value="XM_036159052.1"/>
</dbReference>
<dbReference type="SMR" id="Q8K2P7"/>
<dbReference type="BioGRID" id="222905">
    <property type="interactions" value="2"/>
</dbReference>
<dbReference type="FunCoup" id="Q8K2P7">
    <property type="interactions" value="238"/>
</dbReference>
<dbReference type="STRING" id="10090.ENSMUSP00000085799"/>
<dbReference type="GlyCosmos" id="Q8K2P7">
    <property type="glycosylation" value="2 sites, No reported glycans"/>
</dbReference>
<dbReference type="GlyGen" id="Q8K2P7">
    <property type="glycosylation" value="2 sites"/>
</dbReference>
<dbReference type="iPTMnet" id="Q8K2P7"/>
<dbReference type="PhosphoSitePlus" id="Q8K2P7"/>
<dbReference type="SwissPalm" id="Q8K2P7"/>
<dbReference type="jPOST" id="Q8K2P7"/>
<dbReference type="PaxDb" id="10090-ENSMUSP00000097833"/>
<dbReference type="PeptideAtlas" id="Q8K2P7"/>
<dbReference type="ProteomicsDB" id="256568">
    <molecule id="Q8K2P7-1"/>
</dbReference>
<dbReference type="ProteomicsDB" id="256569">
    <molecule id="Q8K2P7-2"/>
</dbReference>
<dbReference type="ProteomicsDB" id="256570">
    <molecule id="Q8K2P7-3"/>
</dbReference>
<dbReference type="Pumba" id="Q8K2P7"/>
<dbReference type="ABCD" id="Q8K2P7">
    <property type="antibodies" value="2 sequenced antibodies"/>
</dbReference>
<dbReference type="Antibodypedia" id="7400">
    <property type="antibodies" value="207 antibodies from 31 providers"/>
</dbReference>
<dbReference type="DNASU" id="105727"/>
<dbReference type="Ensembl" id="ENSMUST00000088452.11">
    <molecule id="Q8K2P7-1"/>
    <property type="protein sequence ID" value="ENSMUSP00000085799.5"/>
    <property type="gene ID" value="ENSMUSG00000023169.16"/>
</dbReference>
<dbReference type="Ensembl" id="ENSMUST00000088454.13">
    <molecule id="Q8K2P7-1"/>
    <property type="protein sequence ID" value="ENSMUSP00000085801.6"/>
    <property type="gene ID" value="ENSMUSG00000023169.16"/>
</dbReference>
<dbReference type="Ensembl" id="ENSMUST00000100262.4">
    <molecule id="Q8K2P7-1"/>
    <property type="protein sequence ID" value="ENSMUSP00000097833.3"/>
    <property type="gene ID" value="ENSMUSG00000023169.16"/>
</dbReference>
<dbReference type="Ensembl" id="ENSMUST00000230767.2">
    <molecule id="Q8K2P7-3"/>
    <property type="protein sequence ID" value="ENSMUSP00000155160.2"/>
    <property type="gene ID" value="ENSMUSG00000023169.16"/>
</dbReference>
<dbReference type="GeneID" id="105727"/>
<dbReference type="KEGG" id="mmu:105727"/>
<dbReference type="UCSC" id="uc007xkh.2">
    <molecule id="Q8K2P7-1"/>
    <property type="organism name" value="mouse"/>
</dbReference>
<dbReference type="UCSC" id="uc007xkk.2">
    <molecule id="Q8K2P7-2"/>
    <property type="organism name" value="mouse"/>
</dbReference>
<dbReference type="UCSC" id="uc007xkl.2">
    <molecule id="Q8K2P7-3"/>
    <property type="organism name" value="mouse"/>
</dbReference>
<dbReference type="AGR" id="MGI:2145895"/>
<dbReference type="CTD" id="81539"/>
<dbReference type="MGI" id="MGI:2145895">
    <property type="gene designation" value="Slc38a1"/>
</dbReference>
<dbReference type="VEuPathDB" id="HostDB:ENSMUSG00000023169"/>
<dbReference type="eggNOG" id="KOG1305">
    <property type="taxonomic scope" value="Eukaryota"/>
</dbReference>
<dbReference type="GeneTree" id="ENSGT00940000160716"/>
<dbReference type="HOGENOM" id="CLU_009020_0_2_1"/>
<dbReference type="InParanoid" id="Q8K2P7"/>
<dbReference type="OMA" id="CSAMAIY"/>
<dbReference type="OrthoDB" id="655540at2759"/>
<dbReference type="PhylomeDB" id="Q8K2P7"/>
<dbReference type="TreeFam" id="TF328787"/>
<dbReference type="Reactome" id="R-MMU-210455">
    <property type="pathway name" value="Astrocytic Glutamate-Glutamine Uptake And Metabolism"/>
</dbReference>
<dbReference type="Reactome" id="R-MMU-352230">
    <property type="pathway name" value="Amino acid transport across the plasma membrane"/>
</dbReference>
<dbReference type="BioGRID-ORCS" id="105727">
    <property type="hits" value="1 hit in 81 CRISPR screens"/>
</dbReference>
<dbReference type="ChiTaRS" id="Slc38a1">
    <property type="organism name" value="mouse"/>
</dbReference>
<dbReference type="PRO" id="PR:Q8K2P7"/>
<dbReference type="Proteomes" id="UP000000589">
    <property type="component" value="Chromosome 15"/>
</dbReference>
<dbReference type="RNAct" id="Q8K2P7">
    <property type="molecule type" value="protein"/>
</dbReference>
<dbReference type="Bgee" id="ENSMUSG00000023169">
    <property type="expression patterns" value="Expressed in placenta labyrinth and 255 other cell types or tissues"/>
</dbReference>
<dbReference type="GO" id="GO:0030424">
    <property type="term" value="C:axon"/>
    <property type="evidence" value="ECO:0000314"/>
    <property type="project" value="MGI"/>
</dbReference>
<dbReference type="GO" id="GO:0016323">
    <property type="term" value="C:basolateral plasma membrane"/>
    <property type="evidence" value="ECO:0000314"/>
    <property type="project" value="ARUK-UCL"/>
</dbReference>
<dbReference type="GO" id="GO:0098591">
    <property type="term" value="C:external side of apical plasma membrane"/>
    <property type="evidence" value="ECO:0007669"/>
    <property type="project" value="Ensembl"/>
</dbReference>
<dbReference type="GO" id="GO:0016020">
    <property type="term" value="C:membrane"/>
    <property type="evidence" value="ECO:0000314"/>
    <property type="project" value="MGI"/>
</dbReference>
<dbReference type="GO" id="GO:0043025">
    <property type="term" value="C:neuronal cell body"/>
    <property type="evidence" value="ECO:0007669"/>
    <property type="project" value="Ensembl"/>
</dbReference>
<dbReference type="GO" id="GO:0005886">
    <property type="term" value="C:plasma membrane"/>
    <property type="evidence" value="ECO:0000314"/>
    <property type="project" value="MGI"/>
</dbReference>
<dbReference type="GO" id="GO:0015655">
    <property type="term" value="F:alanine:sodium symporter activity"/>
    <property type="evidence" value="ECO:0000250"/>
    <property type="project" value="UniProtKB"/>
</dbReference>
<dbReference type="GO" id="GO:0005283">
    <property type="term" value="F:amino acid:sodium symporter activity"/>
    <property type="evidence" value="ECO:0000250"/>
    <property type="project" value="UniProtKB"/>
</dbReference>
<dbReference type="GO" id="GO:0015375">
    <property type="term" value="F:glycine:sodium symporter activity"/>
    <property type="evidence" value="ECO:0000250"/>
    <property type="project" value="UniProtKB"/>
</dbReference>
<dbReference type="GO" id="GO:0015186">
    <property type="term" value="F:L-glutamine transmembrane transporter activity"/>
    <property type="evidence" value="ECO:0000314"/>
    <property type="project" value="UniProtKB"/>
</dbReference>
<dbReference type="GO" id="GO:0005295">
    <property type="term" value="F:neutral L-amino acid:sodium symporter activity"/>
    <property type="evidence" value="ECO:0000250"/>
    <property type="project" value="UniProtKB"/>
</dbReference>
<dbReference type="GO" id="GO:0005298">
    <property type="term" value="F:proline:sodium symporter activity"/>
    <property type="evidence" value="ECO:0000250"/>
    <property type="project" value="UniProtKB"/>
</dbReference>
<dbReference type="GO" id="GO:0043090">
    <property type="term" value="P:amino acid import"/>
    <property type="evidence" value="ECO:0000250"/>
    <property type="project" value="UniProtKB"/>
</dbReference>
<dbReference type="GO" id="GO:0007565">
    <property type="term" value="P:female pregnancy"/>
    <property type="evidence" value="ECO:0007669"/>
    <property type="project" value="Ensembl"/>
</dbReference>
<dbReference type="GO" id="GO:0009449">
    <property type="term" value="P:gamma-aminobutyric acid biosynthetic process"/>
    <property type="evidence" value="ECO:0000315"/>
    <property type="project" value="UniProtKB"/>
</dbReference>
<dbReference type="GO" id="GO:0006868">
    <property type="term" value="P:glutamine transport"/>
    <property type="evidence" value="ECO:0000314"/>
    <property type="project" value="UniProtKB"/>
</dbReference>
<dbReference type="GO" id="GO:1903803">
    <property type="term" value="P:L-glutamine import across plasma membrane"/>
    <property type="evidence" value="ECO:0000250"/>
    <property type="project" value="UniProtKB"/>
</dbReference>
<dbReference type="GO" id="GO:0048167">
    <property type="term" value="P:regulation of synaptic plasticity"/>
    <property type="evidence" value="ECO:0000315"/>
    <property type="project" value="UniProtKB"/>
</dbReference>
<dbReference type="GO" id="GO:0032228">
    <property type="term" value="P:regulation of synaptic transmission, GABAergic"/>
    <property type="evidence" value="ECO:0000315"/>
    <property type="project" value="UniProtKB"/>
</dbReference>
<dbReference type="InterPro" id="IPR013057">
    <property type="entry name" value="AA_transpt_TM"/>
</dbReference>
<dbReference type="PANTHER" id="PTHR22950">
    <property type="entry name" value="AMINO ACID TRANSPORTER"/>
    <property type="match status" value="1"/>
</dbReference>
<dbReference type="PANTHER" id="PTHR22950:SF184">
    <property type="entry name" value="SODIUM-COUPLED NEUTRAL AMINO ACID SYMPORTER 1"/>
    <property type="match status" value="1"/>
</dbReference>
<dbReference type="Pfam" id="PF01490">
    <property type="entry name" value="Aa_trans"/>
    <property type="match status" value="1"/>
</dbReference>
<organism>
    <name type="scientific">Mus musculus</name>
    <name type="common">Mouse</name>
    <dbReference type="NCBI Taxonomy" id="10090"/>
    <lineage>
        <taxon>Eukaryota</taxon>
        <taxon>Metazoa</taxon>
        <taxon>Chordata</taxon>
        <taxon>Craniata</taxon>
        <taxon>Vertebrata</taxon>
        <taxon>Euteleostomi</taxon>
        <taxon>Mammalia</taxon>
        <taxon>Eutheria</taxon>
        <taxon>Euarchontoglires</taxon>
        <taxon>Glires</taxon>
        <taxon>Rodentia</taxon>
        <taxon>Myomorpha</taxon>
        <taxon>Muroidea</taxon>
        <taxon>Muridae</taxon>
        <taxon>Murinae</taxon>
        <taxon>Mus</taxon>
        <taxon>Mus</taxon>
    </lineage>
</organism>
<gene>
    <name evidence="15" type="primary">Slc38a1</name>
    <name type="synonym">Nat2</name>
    <name evidence="13" type="synonym">Snat1</name>
</gene>
<evidence type="ECO:0000250" key="1">
    <source>
        <dbReference type="UniProtKB" id="Q9H2H9"/>
    </source>
</evidence>
<evidence type="ECO:0000250" key="2">
    <source>
        <dbReference type="UniProtKB" id="Q9JM15"/>
    </source>
</evidence>
<evidence type="ECO:0000255" key="3"/>
<evidence type="ECO:0000255" key="4">
    <source>
        <dbReference type="PROSITE-ProRule" id="PRU00114"/>
    </source>
</evidence>
<evidence type="ECO:0000269" key="5">
    <source>
    </source>
</evidence>
<evidence type="ECO:0000269" key="6">
    <source>
    </source>
</evidence>
<evidence type="ECO:0000269" key="7">
    <source>
    </source>
</evidence>
<evidence type="ECO:0000269" key="8">
    <source>
    </source>
</evidence>
<evidence type="ECO:0000269" key="9">
    <source>
    </source>
</evidence>
<evidence type="ECO:0000303" key="10">
    <source>
    </source>
</evidence>
<evidence type="ECO:0000303" key="11">
    <source>
    </source>
</evidence>
<evidence type="ECO:0000303" key="12">
    <source>
    </source>
</evidence>
<evidence type="ECO:0000303" key="13">
    <source>
    </source>
</evidence>
<evidence type="ECO:0000305" key="14"/>
<evidence type="ECO:0000312" key="15">
    <source>
        <dbReference type="MGI" id="MGI:2145895"/>
    </source>
</evidence>
<evidence type="ECO:0007744" key="16">
    <source>
    </source>
</evidence>
<reference key="1">
    <citation type="journal article" date="2001" name="J. Biol. Chem.">
        <title>Characterization of an N-system amino acid transporter expressed in retina and its involvement in glutamine transport.</title>
        <authorList>
            <person name="Gu S."/>
            <person name="Roderick H.L."/>
            <person name="Camacho P."/>
            <person name="Jiang J.X."/>
        </authorList>
    </citation>
    <scope>NUCLEOTIDE SEQUENCE [MRNA] (ISOFORM 1)</scope>
    <scope>FUNCTION</scope>
    <scope>TRANSPORTER ACTIVITY</scope>
    <scope>BIOPHYSICOCHEMICAL PROPERTIES</scope>
    <scope>TISSUE SPECIFICITY</scope>
    <source>
        <tissue>Brain</tissue>
    </source>
</reference>
<reference key="2">
    <citation type="journal article" date="2005" name="Science">
        <title>The transcriptional landscape of the mammalian genome.</title>
        <authorList>
            <person name="Carninci P."/>
            <person name="Kasukawa T."/>
            <person name="Katayama S."/>
            <person name="Gough J."/>
            <person name="Frith M.C."/>
            <person name="Maeda N."/>
            <person name="Oyama R."/>
            <person name="Ravasi T."/>
            <person name="Lenhard B."/>
            <person name="Wells C."/>
            <person name="Kodzius R."/>
            <person name="Shimokawa K."/>
            <person name="Bajic V.B."/>
            <person name="Brenner S.E."/>
            <person name="Batalov S."/>
            <person name="Forrest A.R."/>
            <person name="Zavolan M."/>
            <person name="Davis M.J."/>
            <person name="Wilming L.G."/>
            <person name="Aidinis V."/>
            <person name="Allen J.E."/>
            <person name="Ambesi-Impiombato A."/>
            <person name="Apweiler R."/>
            <person name="Aturaliya R.N."/>
            <person name="Bailey T.L."/>
            <person name="Bansal M."/>
            <person name="Baxter L."/>
            <person name="Beisel K.W."/>
            <person name="Bersano T."/>
            <person name="Bono H."/>
            <person name="Chalk A.M."/>
            <person name="Chiu K.P."/>
            <person name="Choudhary V."/>
            <person name="Christoffels A."/>
            <person name="Clutterbuck D.R."/>
            <person name="Crowe M.L."/>
            <person name="Dalla E."/>
            <person name="Dalrymple B.P."/>
            <person name="de Bono B."/>
            <person name="Della Gatta G."/>
            <person name="di Bernardo D."/>
            <person name="Down T."/>
            <person name="Engstrom P."/>
            <person name="Fagiolini M."/>
            <person name="Faulkner G."/>
            <person name="Fletcher C.F."/>
            <person name="Fukushima T."/>
            <person name="Furuno M."/>
            <person name="Futaki S."/>
            <person name="Gariboldi M."/>
            <person name="Georgii-Hemming P."/>
            <person name="Gingeras T.R."/>
            <person name="Gojobori T."/>
            <person name="Green R.E."/>
            <person name="Gustincich S."/>
            <person name="Harbers M."/>
            <person name="Hayashi Y."/>
            <person name="Hensch T.K."/>
            <person name="Hirokawa N."/>
            <person name="Hill D."/>
            <person name="Huminiecki L."/>
            <person name="Iacono M."/>
            <person name="Ikeo K."/>
            <person name="Iwama A."/>
            <person name="Ishikawa T."/>
            <person name="Jakt M."/>
            <person name="Kanapin A."/>
            <person name="Katoh M."/>
            <person name="Kawasawa Y."/>
            <person name="Kelso J."/>
            <person name="Kitamura H."/>
            <person name="Kitano H."/>
            <person name="Kollias G."/>
            <person name="Krishnan S.P."/>
            <person name="Kruger A."/>
            <person name="Kummerfeld S.K."/>
            <person name="Kurochkin I.V."/>
            <person name="Lareau L.F."/>
            <person name="Lazarevic D."/>
            <person name="Lipovich L."/>
            <person name="Liu J."/>
            <person name="Liuni S."/>
            <person name="McWilliam S."/>
            <person name="Madan Babu M."/>
            <person name="Madera M."/>
            <person name="Marchionni L."/>
            <person name="Matsuda H."/>
            <person name="Matsuzawa S."/>
            <person name="Miki H."/>
            <person name="Mignone F."/>
            <person name="Miyake S."/>
            <person name="Morris K."/>
            <person name="Mottagui-Tabar S."/>
            <person name="Mulder N."/>
            <person name="Nakano N."/>
            <person name="Nakauchi H."/>
            <person name="Ng P."/>
            <person name="Nilsson R."/>
            <person name="Nishiguchi S."/>
            <person name="Nishikawa S."/>
            <person name="Nori F."/>
            <person name="Ohara O."/>
            <person name="Okazaki Y."/>
            <person name="Orlando V."/>
            <person name="Pang K.C."/>
            <person name="Pavan W.J."/>
            <person name="Pavesi G."/>
            <person name="Pesole G."/>
            <person name="Petrovsky N."/>
            <person name="Piazza S."/>
            <person name="Reed J."/>
            <person name="Reid J.F."/>
            <person name="Ring B.Z."/>
            <person name="Ringwald M."/>
            <person name="Rost B."/>
            <person name="Ruan Y."/>
            <person name="Salzberg S.L."/>
            <person name="Sandelin A."/>
            <person name="Schneider C."/>
            <person name="Schoenbach C."/>
            <person name="Sekiguchi K."/>
            <person name="Semple C.A."/>
            <person name="Seno S."/>
            <person name="Sessa L."/>
            <person name="Sheng Y."/>
            <person name="Shibata Y."/>
            <person name="Shimada H."/>
            <person name="Shimada K."/>
            <person name="Silva D."/>
            <person name="Sinclair B."/>
            <person name="Sperling S."/>
            <person name="Stupka E."/>
            <person name="Sugiura K."/>
            <person name="Sultana R."/>
            <person name="Takenaka Y."/>
            <person name="Taki K."/>
            <person name="Tammoja K."/>
            <person name="Tan S.L."/>
            <person name="Tang S."/>
            <person name="Taylor M.S."/>
            <person name="Tegner J."/>
            <person name="Teichmann S.A."/>
            <person name="Ueda H.R."/>
            <person name="van Nimwegen E."/>
            <person name="Verardo R."/>
            <person name="Wei C.L."/>
            <person name="Yagi K."/>
            <person name="Yamanishi H."/>
            <person name="Zabarovsky E."/>
            <person name="Zhu S."/>
            <person name="Zimmer A."/>
            <person name="Hide W."/>
            <person name="Bult C."/>
            <person name="Grimmond S.M."/>
            <person name="Teasdale R.D."/>
            <person name="Liu E.T."/>
            <person name="Brusic V."/>
            <person name="Quackenbush J."/>
            <person name="Wahlestedt C."/>
            <person name="Mattick J.S."/>
            <person name="Hume D.A."/>
            <person name="Kai C."/>
            <person name="Sasaki D."/>
            <person name="Tomaru Y."/>
            <person name="Fukuda S."/>
            <person name="Kanamori-Katayama M."/>
            <person name="Suzuki M."/>
            <person name="Aoki J."/>
            <person name="Arakawa T."/>
            <person name="Iida J."/>
            <person name="Imamura K."/>
            <person name="Itoh M."/>
            <person name="Kato T."/>
            <person name="Kawaji H."/>
            <person name="Kawagashira N."/>
            <person name="Kawashima T."/>
            <person name="Kojima M."/>
            <person name="Kondo S."/>
            <person name="Konno H."/>
            <person name="Nakano K."/>
            <person name="Ninomiya N."/>
            <person name="Nishio T."/>
            <person name="Okada M."/>
            <person name="Plessy C."/>
            <person name="Shibata K."/>
            <person name="Shiraki T."/>
            <person name="Suzuki S."/>
            <person name="Tagami M."/>
            <person name="Waki K."/>
            <person name="Watahiki A."/>
            <person name="Okamura-Oho Y."/>
            <person name="Suzuki H."/>
            <person name="Kawai J."/>
            <person name="Hayashizaki Y."/>
        </authorList>
    </citation>
    <scope>NUCLEOTIDE SEQUENCE [LARGE SCALE MRNA] (ISOFORMS 1 AND 2)</scope>
    <source>
        <strain>C57BL/6J</strain>
        <tissue>Cerebellum</tissue>
        <tissue>Diencephalon</tissue>
        <tissue>Embryo</tissue>
        <tissue>Embryonic head</tissue>
        <tissue>Embryonic stem cell</tissue>
        <tissue>Head</tissue>
    </source>
</reference>
<reference key="3">
    <citation type="journal article" date="2004" name="Genome Res.">
        <title>The status, quality, and expansion of the NIH full-length cDNA project: the Mammalian Gene Collection (MGC).</title>
        <authorList>
            <consortium name="The MGC Project Team"/>
        </authorList>
    </citation>
    <scope>NUCLEOTIDE SEQUENCE [LARGE SCALE MRNA] (ISOFORMS 1 AND 3)</scope>
    <source>
        <strain>CD-1</strain>
        <strain>FVB/N-3</strain>
        <tissue>Mammary tumor</tissue>
        <tissue>Neural stem cell</tissue>
    </source>
</reference>
<reference key="4">
    <citation type="journal article" date="2007" name="J. Biol. Chem.">
        <title>A critical role for system A amino acid transport in the regulation of dendritic development by brain-derived neurotrophic factor (BDNF).</title>
        <authorList>
            <person name="Burkhalter J."/>
            <person name="Fiumelli H."/>
            <person name="Erickson J.D."/>
            <person name="Martin J.-L."/>
        </authorList>
    </citation>
    <scope>INDUCTION BY BDNF</scope>
    <scope>FUNCTION</scope>
    <scope>TRANSPORTER ACTIVITY</scope>
</reference>
<reference key="5">
    <citation type="journal article" date="2010" name="Cell">
        <title>A tissue-specific atlas of mouse protein phosphorylation and expression.</title>
        <authorList>
            <person name="Huttlin E.L."/>
            <person name="Jedrychowski M.P."/>
            <person name="Elias J.E."/>
            <person name="Goswami T."/>
            <person name="Rad R."/>
            <person name="Beausoleil S.A."/>
            <person name="Villen J."/>
            <person name="Haas W."/>
            <person name="Sowa M.E."/>
            <person name="Gygi S.P."/>
        </authorList>
    </citation>
    <scope>PHOSPHORYLATION [LARGE SCALE ANALYSIS] AT SER-6 AND THR-11</scope>
    <scope>IDENTIFICATION BY MASS SPECTROMETRY [LARGE SCALE ANALYSIS]</scope>
    <source>
        <tissue>Brain</tissue>
    </source>
</reference>
<reference key="6">
    <citation type="journal article" date="2016" name="Biochem. J.">
        <title>N-Glycosylation influences transport, but not cellular trafficking, of a neuronal amino acid transporter SNAT1.</title>
        <authorList>
            <person name="Iyer R.P."/>
            <person name="Gu S."/>
            <person name="Jiang J.X."/>
        </authorList>
    </citation>
    <scope>FUNCTION</scope>
    <scope>TRANSPORTER ACTIVITY</scope>
    <scope>SUBCELLULAR LOCATION</scope>
    <scope>GLYCOSYLATION AT ASN-251 AND ASN-257</scope>
    <scope>MUTAGENESIS OF ASN-15; ASN-251; ASN-257 AND ASN-310</scope>
</reference>
<reference key="7">
    <citation type="journal article" date="2019" name="Cereb. Cortex">
        <title>The Glutamine Transporter Slc38a1 Regulates GABAergic Neurotransmission and Synaptic Plasticity.</title>
        <authorList>
            <person name="Qureshi T."/>
            <person name="Soerensen C."/>
            <person name="Berghuis P."/>
            <person name="Jensen V."/>
            <person name="Dobszay M.B."/>
            <person name="Farkas T."/>
            <person name="Dalen K.T."/>
            <person name="Guo C."/>
            <person name="Hassel B."/>
            <person name="Utheim T.P."/>
            <person name="Hvalby O."/>
            <person name="Hafting T."/>
            <person name="Harkany T."/>
            <person name="Fyhn M."/>
            <person name="Chaudhry F.A."/>
        </authorList>
    </citation>
    <scope>FUNCTION</scope>
</reference>
<reference key="8">
    <citation type="journal article" date="2020" name="Cells">
        <title>Slc38a1 Conveys Astroglia-Derived Glutamine into GABAergic Interneurons for Neurotransmitter GABA Synthesis.</title>
        <authorList>
            <person name="Qureshi T."/>
            <person name="Bjoerkmo M."/>
            <person name="Nordengen K."/>
            <person name="Gundersen V."/>
            <person name="Utheim T.P."/>
            <person name="Watne L.O."/>
            <person name="Storm-Mathisen J."/>
            <person name="Hassel B."/>
            <person name="Chaudhry F.A."/>
        </authorList>
    </citation>
    <scope>FUNCTION</scope>
    <scope>TRANSPORTER ACTIVITY</scope>
</reference>
<accession>Q8K2P7</accession>
<accession>Q3TNM1</accession>
<accession>Q3TQ53</accession>
<accession>Q6NXZ2</accession>
<accession>Q8BHI3</accession>
<accession>Q8BXE2</accession>
<accession>Q99PR1</accession>
<comment type="function">
    <text evidence="1 5 6 7 8 9">Symporter that cotransports short-chain neutral amino acids and sodium ions from the extraccellular to the intracellular side of the cell membrane (PubMed:11325958, PubMed:17179157, PubMed:27655909, PubMed:32668809). The transport is elctrogenic, pH dependent and driven by the Na(+) electrochemical gradient (PubMed:11325958). Participates in the astroglia-derived glutamine transport into GABAergic interneurons for neurotransmitter GABA de novo synthesis (PubMed:31050701, PubMed:32668809). May also contributes to amino acid transport in placental trophoblast (By similarity). Regulates synaptic plasticity (PubMed:31050701).</text>
</comment>
<comment type="catalytic activity">
    <reaction evidence="5 6 7 9">
        <text>L-glutamine(in) + Na(+)(in) = L-glutamine(out) + Na(+)(out)</text>
        <dbReference type="Rhea" id="RHEA:68236"/>
        <dbReference type="ChEBI" id="CHEBI:29101"/>
        <dbReference type="ChEBI" id="CHEBI:58359"/>
    </reaction>
    <physiologicalReaction direction="left-to-right" evidence="7 9">
        <dbReference type="Rhea" id="RHEA:68237"/>
    </physiologicalReaction>
</comment>
<comment type="catalytic activity">
    <reaction evidence="5">
        <text>L-alanine(in) + Na(+)(in) = L-alanine(out) + Na(+)(out)</text>
        <dbReference type="Rhea" id="RHEA:29283"/>
        <dbReference type="ChEBI" id="CHEBI:29101"/>
        <dbReference type="ChEBI" id="CHEBI:57972"/>
    </reaction>
    <physiologicalReaction direction="right-to-left" evidence="2">
        <dbReference type="Rhea" id="RHEA:29285"/>
    </physiologicalReaction>
</comment>
<comment type="catalytic activity">
    <reaction evidence="5">
        <text>L-histidine(in) + Na(+)(in) = L-histidine(out) + Na(+)(out)</text>
        <dbReference type="Rhea" id="RHEA:71583"/>
        <dbReference type="ChEBI" id="CHEBI:29101"/>
        <dbReference type="ChEBI" id="CHEBI:57595"/>
    </reaction>
    <physiologicalReaction direction="right-to-left" evidence="2">
        <dbReference type="Rhea" id="RHEA:71585"/>
    </physiologicalReaction>
</comment>
<comment type="catalytic activity">
    <reaction evidence="2">
        <text>L-asparagine(in) + Na(+)(in) = L-asparagine(out) + Na(+)(out)</text>
        <dbReference type="Rhea" id="RHEA:71383"/>
        <dbReference type="ChEBI" id="CHEBI:29101"/>
        <dbReference type="ChEBI" id="CHEBI:58048"/>
    </reaction>
    <physiologicalReaction direction="right-to-left" evidence="2">
        <dbReference type="Rhea" id="RHEA:71385"/>
    </physiologicalReaction>
</comment>
<comment type="catalytic activity">
    <reaction evidence="2">
        <text>L-serine(in) + Na(+)(in) = L-serine(out) + Na(+)(out)</text>
        <dbReference type="Rhea" id="RHEA:29575"/>
        <dbReference type="ChEBI" id="CHEBI:29101"/>
        <dbReference type="ChEBI" id="CHEBI:33384"/>
    </reaction>
    <physiologicalReaction direction="right-to-left" evidence="2">
        <dbReference type="Rhea" id="RHEA:29577"/>
    </physiologicalReaction>
</comment>
<comment type="catalytic activity">
    <reaction evidence="2">
        <text>L-cysteine(in) + Na(+)(in) = L-cysteine(out) + Na(+)(out)</text>
        <dbReference type="Rhea" id="RHEA:68232"/>
        <dbReference type="ChEBI" id="CHEBI:29101"/>
        <dbReference type="ChEBI" id="CHEBI:35235"/>
    </reaction>
    <physiologicalReaction direction="right-to-left" evidence="2">
        <dbReference type="Rhea" id="RHEA:68234"/>
    </physiologicalReaction>
</comment>
<comment type="catalytic activity">
    <reaction evidence="2">
        <text>L-methionine(in) + Na(+)(in) = L-methionine(out) + Na(+)(out)</text>
        <dbReference type="Rhea" id="RHEA:68240"/>
        <dbReference type="ChEBI" id="CHEBI:29101"/>
        <dbReference type="ChEBI" id="CHEBI:57844"/>
    </reaction>
    <physiologicalReaction direction="right-to-left" evidence="2">
        <dbReference type="Rhea" id="RHEA:68242"/>
    </physiologicalReaction>
</comment>
<comment type="catalytic activity">
    <reaction evidence="2">
        <text>glycine(in) + Na(+)(in) = glycine(out) + Na(+)(out)</text>
        <dbReference type="Rhea" id="RHEA:68228"/>
        <dbReference type="ChEBI" id="CHEBI:29101"/>
        <dbReference type="ChEBI" id="CHEBI:57305"/>
    </reaction>
    <physiologicalReaction direction="right-to-left" evidence="2">
        <dbReference type="Rhea" id="RHEA:68230"/>
    </physiologicalReaction>
</comment>
<comment type="catalytic activity">
    <reaction evidence="2">
        <text>L-threonine(in) + Na(+)(in) = L-threonine(out) + Na(+)(out)</text>
        <dbReference type="Rhea" id="RHEA:69999"/>
        <dbReference type="ChEBI" id="CHEBI:29101"/>
        <dbReference type="ChEBI" id="CHEBI:57926"/>
    </reaction>
    <physiologicalReaction direction="right-to-left" evidence="2">
        <dbReference type="Rhea" id="RHEA:70001"/>
    </physiologicalReaction>
</comment>
<comment type="catalytic activity">
    <reaction evidence="2">
        <text>L-proline(in) + Na(+)(in) = L-proline(out) + Na(+)(out)</text>
        <dbReference type="Rhea" id="RHEA:28967"/>
        <dbReference type="ChEBI" id="CHEBI:29101"/>
        <dbReference type="ChEBI" id="CHEBI:60039"/>
    </reaction>
    <physiologicalReaction direction="right-to-left" evidence="2">
        <dbReference type="Rhea" id="RHEA:28969"/>
    </physiologicalReaction>
</comment>
<comment type="activity regulation">
    <text evidence="2">Inhibited by alpha-(methylamino)isobutyric acid (MeAIB). Inhibited by lithium, potassium, choline ions, N-methylglucamine. The pH dependence has an allosteric effect on the transport.</text>
</comment>
<comment type="biophysicochemical properties">
    <kinetics>
        <KM evidence="5">2400 uM for L-glutamine (at pH 7.0)</KM>
        <KM evidence="5">890 uM for L-glutamine (at pH 7.5)</KM>
        <KM evidence="5">540 uM for L-glutamine (at pH 8.0)</KM>
        <text evidence="5">Decrease in pH from 8.0 to 7.0 results in decreased affinity for L-glutamine.</text>
    </kinetics>
</comment>
<comment type="subcellular location">
    <subcellularLocation>
        <location evidence="7">Cell membrane</location>
        <topology evidence="2">Multi-pass membrane protein</topology>
    </subcellularLocation>
    <text evidence="2">Restricted to the somatodendritic compartment of neurons. Found in the cellular processes of neurons in the developing brain.</text>
</comment>
<comment type="alternative products">
    <event type="alternative splicing"/>
    <isoform>
        <id>Q8K2P7-1</id>
        <name>1</name>
        <sequence type="displayed"/>
    </isoform>
    <isoform>
        <id>Q8K2P7-2</id>
        <name>2</name>
        <sequence type="described" ref="VSP_029307 VSP_029308"/>
    </isoform>
    <isoform>
        <id>Q8K2P7-3</id>
        <name>3</name>
        <sequence type="described" ref="VSP_029305 VSP_029306"/>
    </isoform>
</comment>
<comment type="tissue specificity">
    <text evidence="5">Specifically expressed in brain and retina (at protein level). Also detected in spleen, small intestine and lung.</text>
</comment>
<comment type="induction">
    <text evidence="6">Up-regulated by BDNF.</text>
</comment>
<comment type="PTM">
    <text evidence="7">N-glycosylation plays an important role in the L-glutamine transport.</text>
</comment>
<comment type="similarity">
    <text evidence="14">Belongs to the amino acid/polyamine transporter 2 family.</text>
</comment>
<name>S38A1_MOUSE</name>
<protein>
    <recommendedName>
        <fullName evidence="14">Sodium-coupled neutral amino acid symporter 1</fullName>
    </recommendedName>
    <alternativeName>
        <fullName>Amino acid transporter A1</fullName>
    </alternativeName>
    <alternativeName>
        <fullName evidence="10">MNat2</fullName>
    </alternativeName>
    <alternativeName>
        <fullName>N-system amino acid transporter 2</fullName>
    </alternativeName>
    <alternativeName>
        <fullName>Solute carrier family 38 member 1</fullName>
    </alternativeName>
    <alternativeName>
        <fullName>System A amino acid transporter 1</fullName>
    </alternativeName>
    <alternativeName>
        <fullName>System N amino acid transporter 1</fullName>
    </alternativeName>
</protein>
<proteinExistence type="evidence at protein level"/>
<feature type="chain" id="PRO_0000310476" description="Sodium-coupled neutral amino acid symporter 1">
    <location>
        <begin position="1"/>
        <end position="485"/>
    </location>
</feature>
<feature type="topological domain" description="Cytoplasmic" evidence="3">
    <location>
        <begin position="1"/>
        <end position="74"/>
    </location>
</feature>
<feature type="transmembrane region" description="Helical" evidence="3">
    <location>
        <begin position="75"/>
        <end position="97"/>
    </location>
</feature>
<feature type="topological domain" description="Extracellular" evidence="3">
    <location>
        <begin position="98"/>
        <end position="112"/>
    </location>
</feature>
<feature type="transmembrane region" description="Helical" evidence="3">
    <location>
        <begin position="113"/>
        <end position="133"/>
    </location>
</feature>
<feature type="topological domain" description="Cytoplasmic" evidence="3">
    <location>
        <begin position="134"/>
        <end position="148"/>
    </location>
</feature>
<feature type="transmembrane region" description="Helical" evidence="3">
    <location>
        <begin position="149"/>
        <end position="169"/>
    </location>
</feature>
<feature type="topological domain" description="Extracellular" evidence="3">
    <location>
        <begin position="170"/>
        <end position="188"/>
    </location>
</feature>
<feature type="transmembrane region" description="Helical" evidence="3">
    <location>
        <begin position="189"/>
        <end position="211"/>
    </location>
</feature>
<feature type="topological domain" description="Cytoplasmic" evidence="3">
    <location>
        <begin position="212"/>
        <end position="216"/>
    </location>
</feature>
<feature type="transmembrane region" description="Helical" evidence="3">
    <location>
        <begin position="217"/>
        <end position="237"/>
    </location>
</feature>
<feature type="topological domain" description="Extracellular" evidence="3">
    <location>
        <begin position="238"/>
        <end position="273"/>
    </location>
</feature>
<feature type="transmembrane region" description="Helical" evidence="3">
    <location>
        <begin position="274"/>
        <end position="294"/>
    </location>
</feature>
<feature type="topological domain" description="Cytoplasmic" evidence="3">
    <location>
        <begin position="295"/>
        <end position="310"/>
    </location>
</feature>
<feature type="transmembrane region" description="Helical" evidence="3">
    <location>
        <begin position="311"/>
        <end position="331"/>
    </location>
</feature>
<feature type="topological domain" description="Extracellular" evidence="3">
    <location>
        <begin position="332"/>
        <end position="348"/>
    </location>
</feature>
<feature type="transmembrane region" description="Helical" evidence="3">
    <location>
        <begin position="349"/>
        <end position="369"/>
    </location>
</feature>
<feature type="topological domain" description="Cytoplasmic" evidence="3">
    <location>
        <begin position="370"/>
        <end position="391"/>
    </location>
</feature>
<feature type="transmembrane region" description="Helical" evidence="3">
    <location>
        <begin position="392"/>
        <end position="412"/>
    </location>
</feature>
<feature type="topological domain" description="Extracellular" evidence="3">
    <location>
        <begin position="413"/>
        <end position="414"/>
    </location>
</feature>
<feature type="transmembrane region" description="Helical" evidence="3">
    <location>
        <begin position="415"/>
        <end position="435"/>
    </location>
</feature>
<feature type="topological domain" description="Cytoplasmic" evidence="3">
    <location>
        <begin position="436"/>
        <end position="450"/>
    </location>
</feature>
<feature type="transmembrane region" description="Helical" evidence="3">
    <location>
        <begin position="451"/>
        <end position="471"/>
    </location>
</feature>
<feature type="topological domain" description="Extracellular" evidence="3">
    <location>
        <begin position="472"/>
        <end position="485"/>
    </location>
</feature>
<feature type="modified residue" description="Phosphoserine" evidence="16">
    <location>
        <position position="6"/>
    </location>
</feature>
<feature type="modified residue" description="Phosphothreonine" evidence="16">
    <location>
        <position position="11"/>
    </location>
</feature>
<feature type="modified residue" description="Phosphoserine" evidence="1">
    <location>
        <position position="25"/>
    </location>
</feature>
<feature type="modified residue" description="Phosphoserine" evidence="1">
    <location>
        <position position="28"/>
    </location>
</feature>
<feature type="modified residue" description="Phosphoserine" evidence="1">
    <location>
        <position position="49"/>
    </location>
</feature>
<feature type="modified residue" description="Phosphoserine" evidence="1">
    <location>
        <position position="52"/>
    </location>
</feature>
<feature type="modified residue" description="Phosphothreonine" evidence="1">
    <location>
        <position position="54"/>
    </location>
</feature>
<feature type="modified residue" description="Phosphoserine" evidence="1">
    <location>
        <position position="56"/>
    </location>
</feature>
<feature type="glycosylation site" description="N-linked (GlcNAc...) asparagine" evidence="3 7">
    <location>
        <position position="251"/>
    </location>
</feature>
<feature type="glycosylation site" description="N-linked (GlcNAc...) asparagine" evidence="3 7">
    <location>
        <position position="257"/>
    </location>
</feature>
<feature type="disulfide bond" evidence="4">
    <location>
        <begin position="245"/>
        <end position="262"/>
    </location>
</feature>
<feature type="splice variant" id="VSP_029305" description="In isoform 3." evidence="11">
    <original>IPGTTS</original>
    <variation>VSIICM</variation>
    <location>
        <begin position="67"/>
        <end position="72"/>
    </location>
</feature>
<feature type="splice variant" id="VSP_029306" description="In isoform 3." evidence="11">
    <location>
        <begin position="73"/>
        <end position="485"/>
    </location>
</feature>
<feature type="splice variant" id="VSP_029307" description="In isoform 2." evidence="12">
    <original>EKVQSDLLHKYQ</original>
    <variation>GKLLPLAMPICT</variation>
    <location>
        <begin position="333"/>
        <end position="344"/>
    </location>
</feature>
<feature type="splice variant" id="VSP_029308" description="In isoform 2." evidence="12">
    <location>
        <begin position="345"/>
        <end position="485"/>
    </location>
</feature>
<feature type="mutagenesis site" description="Does not affect N-glycosylation. Does not affect cell membrane localization." evidence="7">
    <original>N</original>
    <variation>Q</variation>
    <location>
        <position position="15"/>
    </location>
</feature>
<feature type="mutagenesis site" description="Affects N-glycosylation. Abolishes Nglycosylation; when associated with Q-257 and Q-310. Does not affect cell membrane localization. Abolishes L-glutamine transport activity; when associated with Q-257." evidence="7">
    <original>N</original>
    <variation>Q</variation>
    <location>
        <position position="251"/>
    </location>
</feature>
<feature type="mutagenesis site" description="Affects N-glycosylation. Abolishes Nglycosylation; when associated with Q-251 and Q-310. Does not affect cell membrane localization. Abolishes L-glutamine transport activity; when associated with Q-251." evidence="7">
    <original>N</original>
    <variation>Q</variation>
    <location>
        <position position="257"/>
    </location>
</feature>
<feature type="mutagenesis site" description="Does not affect N-glycosylation. Abolishes Nglycosylation; when associated with Q-251 and Q-257. Does not affect cell membrane localization." evidence="7">
    <original>N</original>
    <variation>Q</variation>
    <location>
        <position position="310"/>
    </location>
</feature>
<feature type="sequence conflict" description="In Ref. 2; BAE38067." evidence="14" ref="2">
    <original>E</original>
    <variation>G</variation>
    <location>
        <position position="48"/>
    </location>
</feature>
<feature type="sequence conflict" description="In Ref. 2; BAC33064." evidence="14" ref="2">
    <original>P</original>
    <variation>H</variation>
    <location>
        <position position="244"/>
    </location>
</feature>
<feature type="sequence conflict" description="In Ref. 1; AAG43433." evidence="14" ref="1">
    <original>V</original>
    <variation>A</variation>
    <location>
        <position position="354"/>
    </location>
</feature>
<feature type="sequence conflict" description="In Ref. 1; AAG43433." evidence="14" ref="1">
    <original>V</original>
    <variation>A</variation>
    <location>
        <position position="360"/>
    </location>
</feature>